<proteinExistence type="inferred from homology"/>
<geneLocation type="plasmid">
    <name>pSymA</name>
    <name>megaplasmid 1</name>
</geneLocation>
<protein>
    <recommendedName>
        <fullName>Arginine deiminase 1</fullName>
        <shortName>ADI 1</shortName>
        <ecNumber>3.5.3.6</ecNumber>
    </recommendedName>
    <alternativeName>
        <fullName>Arginine dihydrolase 1</fullName>
        <shortName>AD 1</shortName>
    </alternativeName>
</protein>
<gene>
    <name type="primary">arcA1</name>
    <name type="ordered locus">RA0367</name>
    <name type="ORF">SMa0693</name>
</gene>
<dbReference type="EC" id="3.5.3.6"/>
<dbReference type="EMBL" id="AE006469">
    <property type="protein sequence ID" value="AAK65025.1"/>
    <property type="molecule type" value="Genomic_DNA"/>
</dbReference>
<dbReference type="PIR" id="G95307">
    <property type="entry name" value="G95307"/>
</dbReference>
<dbReference type="RefSeq" id="NP_435613.1">
    <property type="nucleotide sequence ID" value="NC_003037.1"/>
</dbReference>
<dbReference type="SMR" id="Q92ZT2"/>
<dbReference type="EnsemblBacteria" id="AAK65025">
    <property type="protein sequence ID" value="AAK65025"/>
    <property type="gene ID" value="SMa0693"/>
</dbReference>
<dbReference type="KEGG" id="sme:SMa0693"/>
<dbReference type="PATRIC" id="fig|266834.11.peg.383"/>
<dbReference type="HOGENOM" id="CLU_052662_0_0_5"/>
<dbReference type="OrthoDB" id="9807502at2"/>
<dbReference type="UniPathway" id="UPA00254">
    <property type="reaction ID" value="UER00364"/>
</dbReference>
<dbReference type="Proteomes" id="UP000001976">
    <property type="component" value="Plasmid pSymA"/>
</dbReference>
<dbReference type="GO" id="GO:0005737">
    <property type="term" value="C:cytoplasm"/>
    <property type="evidence" value="ECO:0007669"/>
    <property type="project" value="UniProtKB-SubCell"/>
</dbReference>
<dbReference type="GO" id="GO:0016990">
    <property type="term" value="F:arginine deiminase activity"/>
    <property type="evidence" value="ECO:0007669"/>
    <property type="project" value="UniProtKB-UniRule"/>
</dbReference>
<dbReference type="GO" id="GO:0019547">
    <property type="term" value="P:arginine catabolic process to ornithine"/>
    <property type="evidence" value="ECO:0007669"/>
    <property type="project" value="UniProtKB-UniRule"/>
</dbReference>
<dbReference type="GO" id="GO:0019546">
    <property type="term" value="P:arginine deiminase pathway"/>
    <property type="evidence" value="ECO:0007669"/>
    <property type="project" value="TreeGrafter"/>
</dbReference>
<dbReference type="Gene3D" id="1.10.3930.10">
    <property type="entry name" value="Arginine deiminase"/>
    <property type="match status" value="1"/>
</dbReference>
<dbReference type="Gene3D" id="3.75.10.10">
    <property type="entry name" value="L-arginine/glycine Amidinotransferase, Chain A"/>
    <property type="match status" value="1"/>
</dbReference>
<dbReference type="HAMAP" id="MF_00242">
    <property type="entry name" value="Arg_deiminase"/>
    <property type="match status" value="1"/>
</dbReference>
<dbReference type="InterPro" id="IPR003876">
    <property type="entry name" value="Arg_deiminase"/>
</dbReference>
<dbReference type="NCBIfam" id="TIGR01078">
    <property type="entry name" value="arcA"/>
    <property type="match status" value="1"/>
</dbReference>
<dbReference type="NCBIfam" id="NF002381">
    <property type="entry name" value="PRK01388.1"/>
    <property type="match status" value="1"/>
</dbReference>
<dbReference type="PANTHER" id="PTHR47271">
    <property type="entry name" value="ARGININE DEIMINASE"/>
    <property type="match status" value="1"/>
</dbReference>
<dbReference type="PANTHER" id="PTHR47271:SF3">
    <property type="entry name" value="ARGININE DEIMINASE"/>
    <property type="match status" value="1"/>
</dbReference>
<dbReference type="Pfam" id="PF02274">
    <property type="entry name" value="ADI"/>
    <property type="match status" value="1"/>
</dbReference>
<dbReference type="PIRSF" id="PIRSF006356">
    <property type="entry name" value="Arg_deiminase"/>
    <property type="match status" value="1"/>
</dbReference>
<dbReference type="PRINTS" id="PR01466">
    <property type="entry name" value="ARGDEIMINASE"/>
</dbReference>
<dbReference type="SUPFAM" id="SSF55909">
    <property type="entry name" value="Pentein"/>
    <property type="match status" value="1"/>
</dbReference>
<feature type="chain" id="PRO_0000182230" description="Arginine deiminase 1">
    <location>
        <begin position="1"/>
        <end position="409"/>
    </location>
</feature>
<feature type="active site" description="Amidino-cysteine intermediate" evidence="1">
    <location>
        <position position="398"/>
    </location>
</feature>
<organism>
    <name type="scientific">Rhizobium meliloti (strain 1021)</name>
    <name type="common">Ensifer meliloti</name>
    <name type="synonym">Sinorhizobium meliloti</name>
    <dbReference type="NCBI Taxonomy" id="266834"/>
    <lineage>
        <taxon>Bacteria</taxon>
        <taxon>Pseudomonadati</taxon>
        <taxon>Pseudomonadota</taxon>
        <taxon>Alphaproteobacteria</taxon>
        <taxon>Hyphomicrobiales</taxon>
        <taxon>Rhizobiaceae</taxon>
        <taxon>Sinorhizobium/Ensifer group</taxon>
        <taxon>Sinorhizobium</taxon>
    </lineage>
</organism>
<name>ARCA1_RHIME</name>
<sequence>MRTVGVHSEVGKLRTVMVCRPSLAHQRLTPGNCHDLLFDDVIWVHEAQKDHYDFVLKMEERGVEVLELHDLLSDTLIDAEARKFVLDRRVAPNVMGSQIAELMRPWMEEMDSRRLAAFLIGGISIADLPEGQGKALMASAFHSTQFVLPPIPNTLFQRDPSCWIYNGVTCNPMFWPARRAETLIQRAVYKFHPSFKGAAFDIWWGDSDEQFANATMEGGDVMPIGDGILLVGMGERTTYQAVGQVAKALFKAGAATRVIGCLMPKSRAAMHLDTVFTFCDRDVVTLFADVVDQIRCYSLFPLDDEGNFEVRQEDRPMLEVVAEALGVDKLRTIATGGNTYEAEREQWDDGNNVVALEPGVVVAYDRNTYTNTLLRKAGIEVITIRGSELGRGRGGGHCMTCPIWREPTD</sequence>
<accession>Q92ZT2</accession>
<evidence type="ECO:0000250" key="1"/>
<evidence type="ECO:0000305" key="2"/>
<keyword id="KW-0056">Arginine metabolism</keyword>
<keyword id="KW-0963">Cytoplasm</keyword>
<keyword id="KW-0378">Hydrolase</keyword>
<keyword id="KW-0614">Plasmid</keyword>
<keyword id="KW-1185">Reference proteome</keyword>
<comment type="catalytic activity">
    <reaction>
        <text>L-arginine + H2O = L-citrulline + NH4(+)</text>
        <dbReference type="Rhea" id="RHEA:19597"/>
        <dbReference type="ChEBI" id="CHEBI:15377"/>
        <dbReference type="ChEBI" id="CHEBI:28938"/>
        <dbReference type="ChEBI" id="CHEBI:32682"/>
        <dbReference type="ChEBI" id="CHEBI:57743"/>
        <dbReference type="EC" id="3.5.3.6"/>
    </reaction>
</comment>
<comment type="pathway">
    <text>Amino-acid degradation; L-arginine degradation via ADI pathway; carbamoyl phosphate from L-arginine: step 1/2.</text>
</comment>
<comment type="subcellular location">
    <subcellularLocation>
        <location evidence="2">Cytoplasm</location>
    </subcellularLocation>
</comment>
<comment type="similarity">
    <text evidence="2">Belongs to the arginine deiminase family.</text>
</comment>
<reference key="1">
    <citation type="journal article" date="2001" name="Proc. Natl. Acad. Sci. U.S.A.">
        <title>Nucleotide sequence and predicted functions of the entire Sinorhizobium meliloti pSymA megaplasmid.</title>
        <authorList>
            <person name="Barnett M.J."/>
            <person name="Fisher R.F."/>
            <person name="Jones T."/>
            <person name="Komp C."/>
            <person name="Abola A.P."/>
            <person name="Barloy-Hubler F."/>
            <person name="Bowser L."/>
            <person name="Capela D."/>
            <person name="Galibert F."/>
            <person name="Gouzy J."/>
            <person name="Gurjal M."/>
            <person name="Hong A."/>
            <person name="Huizar L."/>
            <person name="Hyman R.W."/>
            <person name="Kahn D."/>
            <person name="Kahn M.L."/>
            <person name="Kalman S."/>
            <person name="Keating D.H."/>
            <person name="Palm C."/>
            <person name="Peck M.C."/>
            <person name="Surzycki R."/>
            <person name="Wells D.H."/>
            <person name="Yeh K.-C."/>
            <person name="Davis R.W."/>
            <person name="Federspiel N.A."/>
            <person name="Long S.R."/>
        </authorList>
    </citation>
    <scope>NUCLEOTIDE SEQUENCE [LARGE SCALE GENOMIC DNA]</scope>
    <source>
        <strain>1021</strain>
    </source>
</reference>
<reference key="2">
    <citation type="journal article" date="2001" name="Science">
        <title>The composite genome of the legume symbiont Sinorhizobium meliloti.</title>
        <authorList>
            <person name="Galibert F."/>
            <person name="Finan T.M."/>
            <person name="Long S.R."/>
            <person name="Puehler A."/>
            <person name="Abola P."/>
            <person name="Ampe F."/>
            <person name="Barloy-Hubler F."/>
            <person name="Barnett M.J."/>
            <person name="Becker A."/>
            <person name="Boistard P."/>
            <person name="Bothe G."/>
            <person name="Boutry M."/>
            <person name="Bowser L."/>
            <person name="Buhrmester J."/>
            <person name="Cadieu E."/>
            <person name="Capela D."/>
            <person name="Chain P."/>
            <person name="Cowie A."/>
            <person name="Davis R.W."/>
            <person name="Dreano S."/>
            <person name="Federspiel N.A."/>
            <person name="Fisher R.F."/>
            <person name="Gloux S."/>
            <person name="Godrie T."/>
            <person name="Goffeau A."/>
            <person name="Golding B."/>
            <person name="Gouzy J."/>
            <person name="Gurjal M."/>
            <person name="Hernandez-Lucas I."/>
            <person name="Hong A."/>
            <person name="Huizar L."/>
            <person name="Hyman R.W."/>
            <person name="Jones T."/>
            <person name="Kahn D."/>
            <person name="Kahn M.L."/>
            <person name="Kalman S."/>
            <person name="Keating D.H."/>
            <person name="Kiss E."/>
            <person name="Komp C."/>
            <person name="Lelaure V."/>
            <person name="Masuy D."/>
            <person name="Palm C."/>
            <person name="Peck M.C."/>
            <person name="Pohl T.M."/>
            <person name="Portetelle D."/>
            <person name="Purnelle B."/>
            <person name="Ramsperger U."/>
            <person name="Surzycki R."/>
            <person name="Thebault P."/>
            <person name="Vandenbol M."/>
            <person name="Vorhoelter F.J."/>
            <person name="Weidner S."/>
            <person name="Wells D.H."/>
            <person name="Wong K."/>
            <person name="Yeh K.-C."/>
            <person name="Batut J."/>
        </authorList>
    </citation>
    <scope>NUCLEOTIDE SEQUENCE [LARGE SCALE GENOMIC DNA]</scope>
    <source>
        <strain>1021</strain>
    </source>
</reference>